<gene>
    <name type="primary">yobD</name>
    <name type="ordered locus">STY1962</name>
    <name type="ordered locus">t1045</name>
</gene>
<comment type="subcellular location">
    <subcellularLocation>
        <location evidence="1">Cell inner membrane</location>
        <topology evidence="1">Multi-pass membrane protein</topology>
    </subcellularLocation>
</comment>
<comment type="similarity">
    <text evidence="3">Belongs to the UPF0266 family.</text>
</comment>
<proteinExistence type="inferred from homology"/>
<evidence type="ECO:0000250" key="1"/>
<evidence type="ECO:0000255" key="2"/>
<evidence type="ECO:0000305" key="3"/>
<organism>
    <name type="scientific">Salmonella typhi</name>
    <dbReference type="NCBI Taxonomy" id="90370"/>
    <lineage>
        <taxon>Bacteria</taxon>
        <taxon>Pseudomonadati</taxon>
        <taxon>Pseudomonadota</taxon>
        <taxon>Gammaproteobacteria</taxon>
        <taxon>Enterobacterales</taxon>
        <taxon>Enterobacteriaceae</taxon>
        <taxon>Salmonella</taxon>
    </lineage>
</organism>
<protein>
    <recommendedName>
        <fullName>UPF0266 membrane protein YobD</fullName>
    </recommendedName>
</protein>
<reference key="1">
    <citation type="journal article" date="2001" name="Nature">
        <title>Complete genome sequence of a multiple drug resistant Salmonella enterica serovar Typhi CT18.</title>
        <authorList>
            <person name="Parkhill J."/>
            <person name="Dougan G."/>
            <person name="James K.D."/>
            <person name="Thomson N.R."/>
            <person name="Pickard D."/>
            <person name="Wain J."/>
            <person name="Churcher C.M."/>
            <person name="Mungall K.L."/>
            <person name="Bentley S.D."/>
            <person name="Holden M.T.G."/>
            <person name="Sebaihia M."/>
            <person name="Baker S."/>
            <person name="Basham D."/>
            <person name="Brooks K."/>
            <person name="Chillingworth T."/>
            <person name="Connerton P."/>
            <person name="Cronin A."/>
            <person name="Davis P."/>
            <person name="Davies R.M."/>
            <person name="Dowd L."/>
            <person name="White N."/>
            <person name="Farrar J."/>
            <person name="Feltwell T."/>
            <person name="Hamlin N."/>
            <person name="Haque A."/>
            <person name="Hien T.T."/>
            <person name="Holroyd S."/>
            <person name="Jagels K."/>
            <person name="Krogh A."/>
            <person name="Larsen T.S."/>
            <person name="Leather S."/>
            <person name="Moule S."/>
            <person name="O'Gaora P."/>
            <person name="Parry C."/>
            <person name="Quail M.A."/>
            <person name="Rutherford K.M."/>
            <person name="Simmonds M."/>
            <person name="Skelton J."/>
            <person name="Stevens K."/>
            <person name="Whitehead S."/>
            <person name="Barrell B.G."/>
        </authorList>
    </citation>
    <scope>NUCLEOTIDE SEQUENCE [LARGE SCALE GENOMIC DNA]</scope>
    <source>
        <strain>CT18</strain>
    </source>
</reference>
<reference key="2">
    <citation type="journal article" date="2003" name="J. Bacteriol.">
        <title>Comparative genomics of Salmonella enterica serovar Typhi strains Ty2 and CT18.</title>
        <authorList>
            <person name="Deng W."/>
            <person name="Liou S.-R."/>
            <person name="Plunkett G. III"/>
            <person name="Mayhew G.F."/>
            <person name="Rose D.J."/>
            <person name="Burland V."/>
            <person name="Kodoyianni V."/>
            <person name="Schwartz D.C."/>
            <person name="Blattner F.R."/>
        </authorList>
    </citation>
    <scope>NUCLEOTIDE SEQUENCE [LARGE SCALE GENOMIC DNA]</scope>
    <source>
        <strain>ATCC 700931 / Ty2</strain>
    </source>
</reference>
<sequence length="152" mass="17797">MTITDLVLILFIAALLAYALYDQFIMPRRNGPTLLSIALLRRGRIDSVIFVGLVAILIYNNVTSHGAQMTTWLLSALALMGFYIFWIRTPRIIFKQRGFFFANVWIEYNRIKEMNLSEDGVLVMQLEQRRLLIRVRNIDDLEKIYKLLIENQ</sequence>
<dbReference type="EMBL" id="AL513382">
    <property type="protein sequence ID" value="CAD05515.1"/>
    <property type="molecule type" value="Genomic_DNA"/>
</dbReference>
<dbReference type="EMBL" id="AE014613">
    <property type="protein sequence ID" value="AAO68711.1"/>
    <property type="molecule type" value="Genomic_DNA"/>
</dbReference>
<dbReference type="RefSeq" id="NP_456339.1">
    <property type="nucleotide sequence ID" value="NC_003198.1"/>
</dbReference>
<dbReference type="RefSeq" id="WP_000156273.1">
    <property type="nucleotide sequence ID" value="NZ_WSUR01000004.1"/>
</dbReference>
<dbReference type="STRING" id="220341.gene:17585880"/>
<dbReference type="KEGG" id="stt:t1045"/>
<dbReference type="KEGG" id="sty:STY1962"/>
<dbReference type="PATRIC" id="fig|220341.7.peg.1980"/>
<dbReference type="eggNOG" id="COG4811">
    <property type="taxonomic scope" value="Bacteria"/>
</dbReference>
<dbReference type="HOGENOM" id="CLU_133645_0_0_6"/>
<dbReference type="OMA" id="LYLFWIR"/>
<dbReference type="OrthoDB" id="2360740at2"/>
<dbReference type="Proteomes" id="UP000000541">
    <property type="component" value="Chromosome"/>
</dbReference>
<dbReference type="Proteomes" id="UP000002670">
    <property type="component" value="Chromosome"/>
</dbReference>
<dbReference type="GO" id="GO:0005886">
    <property type="term" value="C:plasma membrane"/>
    <property type="evidence" value="ECO:0007669"/>
    <property type="project" value="UniProtKB-SubCell"/>
</dbReference>
<dbReference type="HAMAP" id="MF_01071">
    <property type="entry name" value="UPF0266"/>
    <property type="match status" value="1"/>
</dbReference>
<dbReference type="InterPro" id="IPR009328">
    <property type="entry name" value="DUF986"/>
</dbReference>
<dbReference type="NCBIfam" id="NF002791">
    <property type="entry name" value="PRK02913.1"/>
    <property type="match status" value="1"/>
</dbReference>
<dbReference type="Pfam" id="PF06173">
    <property type="entry name" value="DUF986"/>
    <property type="match status" value="1"/>
</dbReference>
<dbReference type="PIRSF" id="PIRSF020687">
    <property type="entry name" value="UCP020687"/>
    <property type="match status" value="1"/>
</dbReference>
<name>YOBD_SALTI</name>
<keyword id="KW-0997">Cell inner membrane</keyword>
<keyword id="KW-1003">Cell membrane</keyword>
<keyword id="KW-0472">Membrane</keyword>
<keyword id="KW-0812">Transmembrane</keyword>
<keyword id="KW-1133">Transmembrane helix</keyword>
<feature type="chain" id="PRO_0000218120" description="UPF0266 membrane protein YobD">
    <location>
        <begin position="1"/>
        <end position="152"/>
    </location>
</feature>
<feature type="topological domain" description="Periplasmic" evidence="2">
    <location>
        <begin position="1"/>
        <end position="5"/>
    </location>
</feature>
<feature type="transmembrane region" description="Helical" evidence="2">
    <location>
        <begin position="6"/>
        <end position="26"/>
    </location>
</feature>
<feature type="topological domain" description="Cytoplasmic" evidence="2">
    <location>
        <begin position="27"/>
        <end position="44"/>
    </location>
</feature>
<feature type="transmembrane region" description="Helical" evidence="2">
    <location>
        <begin position="45"/>
        <end position="65"/>
    </location>
</feature>
<feature type="topological domain" description="Periplasmic" evidence="2">
    <location>
        <position position="66"/>
    </location>
</feature>
<feature type="transmembrane region" description="Helical" evidence="2">
    <location>
        <begin position="67"/>
        <end position="87"/>
    </location>
</feature>
<feature type="topological domain" description="Cytoplasmic" evidence="2">
    <location>
        <begin position="88"/>
        <end position="152"/>
    </location>
</feature>
<accession>Q8Z671</accession>